<name>Y6606_DICDI</name>
<feature type="chain" id="PRO_0000348494" description="Uncharacterized transmembrane protein DDB_G0285607">
    <location>
        <begin position="1"/>
        <end position="361"/>
    </location>
</feature>
<feature type="transmembrane region" description="Helical" evidence="1">
    <location>
        <begin position="225"/>
        <end position="245"/>
    </location>
</feature>
<feature type="region of interest" description="Disordered" evidence="2">
    <location>
        <begin position="53"/>
        <end position="75"/>
    </location>
</feature>
<feature type="region of interest" description="Disordered" evidence="2">
    <location>
        <begin position="150"/>
        <end position="211"/>
    </location>
</feature>
<feature type="compositionally biased region" description="Low complexity" evidence="2">
    <location>
        <begin position="150"/>
        <end position="198"/>
    </location>
</feature>
<feature type="compositionally biased region" description="Basic residues" evidence="2">
    <location>
        <begin position="199"/>
        <end position="211"/>
    </location>
</feature>
<evidence type="ECO:0000255" key="1"/>
<evidence type="ECO:0000256" key="2">
    <source>
        <dbReference type="SAM" id="MobiDB-lite"/>
    </source>
</evidence>
<evidence type="ECO:0000305" key="3"/>
<reference key="1">
    <citation type="journal article" date="2005" name="Nature">
        <title>The genome of the social amoeba Dictyostelium discoideum.</title>
        <authorList>
            <person name="Eichinger L."/>
            <person name="Pachebat J.A."/>
            <person name="Gloeckner G."/>
            <person name="Rajandream M.A."/>
            <person name="Sucgang R."/>
            <person name="Berriman M."/>
            <person name="Song J."/>
            <person name="Olsen R."/>
            <person name="Szafranski K."/>
            <person name="Xu Q."/>
            <person name="Tunggal B."/>
            <person name="Kummerfeld S."/>
            <person name="Madera M."/>
            <person name="Konfortov B.A."/>
            <person name="Rivero F."/>
            <person name="Bankier A.T."/>
            <person name="Lehmann R."/>
            <person name="Hamlin N."/>
            <person name="Davies R."/>
            <person name="Gaudet P."/>
            <person name="Fey P."/>
            <person name="Pilcher K."/>
            <person name="Chen G."/>
            <person name="Saunders D."/>
            <person name="Sodergren E.J."/>
            <person name="Davis P."/>
            <person name="Kerhornou A."/>
            <person name="Nie X."/>
            <person name="Hall N."/>
            <person name="Anjard C."/>
            <person name="Hemphill L."/>
            <person name="Bason N."/>
            <person name="Farbrother P."/>
            <person name="Desany B."/>
            <person name="Just E."/>
            <person name="Morio T."/>
            <person name="Rost R."/>
            <person name="Churcher C.M."/>
            <person name="Cooper J."/>
            <person name="Haydock S."/>
            <person name="van Driessche N."/>
            <person name="Cronin A."/>
            <person name="Goodhead I."/>
            <person name="Muzny D.M."/>
            <person name="Mourier T."/>
            <person name="Pain A."/>
            <person name="Lu M."/>
            <person name="Harper D."/>
            <person name="Lindsay R."/>
            <person name="Hauser H."/>
            <person name="James K.D."/>
            <person name="Quiles M."/>
            <person name="Madan Babu M."/>
            <person name="Saito T."/>
            <person name="Buchrieser C."/>
            <person name="Wardroper A."/>
            <person name="Felder M."/>
            <person name="Thangavelu M."/>
            <person name="Johnson D."/>
            <person name="Knights A."/>
            <person name="Loulseged H."/>
            <person name="Mungall K.L."/>
            <person name="Oliver K."/>
            <person name="Price C."/>
            <person name="Quail M.A."/>
            <person name="Urushihara H."/>
            <person name="Hernandez J."/>
            <person name="Rabbinowitsch E."/>
            <person name="Steffen D."/>
            <person name="Sanders M."/>
            <person name="Ma J."/>
            <person name="Kohara Y."/>
            <person name="Sharp S."/>
            <person name="Simmonds M.N."/>
            <person name="Spiegler S."/>
            <person name="Tivey A."/>
            <person name="Sugano S."/>
            <person name="White B."/>
            <person name="Walker D."/>
            <person name="Woodward J.R."/>
            <person name="Winckler T."/>
            <person name="Tanaka Y."/>
            <person name="Shaulsky G."/>
            <person name="Schleicher M."/>
            <person name="Weinstock G.M."/>
            <person name="Rosenthal A."/>
            <person name="Cox E.C."/>
            <person name="Chisholm R.L."/>
            <person name="Gibbs R.A."/>
            <person name="Loomis W.F."/>
            <person name="Platzer M."/>
            <person name="Kay R.R."/>
            <person name="Williams J.G."/>
            <person name="Dear P.H."/>
            <person name="Noegel A.A."/>
            <person name="Barrell B.G."/>
            <person name="Kuspa A."/>
        </authorList>
    </citation>
    <scope>NUCLEOTIDE SEQUENCE [LARGE SCALE GENOMIC DNA]</scope>
    <source>
        <strain>AX4</strain>
    </source>
</reference>
<gene>
    <name type="ORF">DDB_G0285607</name>
</gene>
<dbReference type="EMBL" id="AAFI02000079">
    <property type="protein sequence ID" value="EAL64641.1"/>
    <property type="molecule type" value="Genomic_DNA"/>
</dbReference>
<dbReference type="RefSeq" id="XP_638159.1">
    <property type="nucleotide sequence ID" value="XM_633067.1"/>
</dbReference>
<dbReference type="SMR" id="Q54MY4"/>
<dbReference type="PaxDb" id="44689-DDB0186606"/>
<dbReference type="EnsemblProtists" id="EAL64641">
    <property type="protein sequence ID" value="EAL64641"/>
    <property type="gene ID" value="DDB_G0285607"/>
</dbReference>
<dbReference type="GeneID" id="8625207"/>
<dbReference type="KEGG" id="ddi:DDB_G0285607"/>
<dbReference type="dictyBase" id="DDB_G0285607"/>
<dbReference type="VEuPathDB" id="AmoebaDB:DDB_G0285607"/>
<dbReference type="eggNOG" id="ENOG502T056">
    <property type="taxonomic scope" value="Eukaryota"/>
</dbReference>
<dbReference type="HOGENOM" id="CLU_768206_0_0_1"/>
<dbReference type="InParanoid" id="Q54MY4"/>
<dbReference type="PRO" id="PR:Q54MY4"/>
<dbReference type="Proteomes" id="UP000002195">
    <property type="component" value="Chromosome 4"/>
</dbReference>
<dbReference type="GO" id="GO:0016020">
    <property type="term" value="C:membrane"/>
    <property type="evidence" value="ECO:0007669"/>
    <property type="project" value="UniProtKB-SubCell"/>
</dbReference>
<accession>Q54MY4</accession>
<sequence length="361" mass="42009">MDFTSSKSVSLFETSLLKENQFQQPQQQPSSPIKPIKPILKLVVNSNKKYNNKNISNNNNNNNNNNNNVCGNINNNNELGDQSDIERSFLINNFEGSDQLTNPYYNSIDIESIIIEVYSNQFSKLNCDFQGLISSKSKILNSNNFSSDYNYNNYNNNNNNNNNNNNNNNNNNNNNNNNNNNNNNKNNNKNNNNKPNNFIHHHHHHHHYHHYHNHHKVENLIDSHIFIGLMAFLILFILMVIGLLIYKYNLKKRVLILLEKRYQRKKKVKTSQFGDDFTSAKFSQVFPKNLNINQKNKDDGDDSSGADDLSVGGESFDGESDFEHFKEVQVVGDIDNVFFFKNNNYYYEENFDNENLINKEF</sequence>
<comment type="subcellular location">
    <subcellularLocation>
        <location evidence="3">Membrane</location>
        <topology evidence="3">Single-pass membrane protein</topology>
    </subcellularLocation>
</comment>
<organism>
    <name type="scientific">Dictyostelium discoideum</name>
    <name type="common">Social amoeba</name>
    <dbReference type="NCBI Taxonomy" id="44689"/>
    <lineage>
        <taxon>Eukaryota</taxon>
        <taxon>Amoebozoa</taxon>
        <taxon>Evosea</taxon>
        <taxon>Eumycetozoa</taxon>
        <taxon>Dictyostelia</taxon>
        <taxon>Dictyosteliales</taxon>
        <taxon>Dictyosteliaceae</taxon>
        <taxon>Dictyostelium</taxon>
    </lineage>
</organism>
<proteinExistence type="predicted"/>
<protein>
    <recommendedName>
        <fullName>Uncharacterized transmembrane protein DDB_G0285607</fullName>
    </recommendedName>
</protein>
<keyword id="KW-0472">Membrane</keyword>
<keyword id="KW-1185">Reference proteome</keyword>
<keyword id="KW-0812">Transmembrane</keyword>
<keyword id="KW-1133">Transmembrane helix</keyword>